<name>HBL_ZEAMP</name>
<feature type="chain" id="PRO_0000193019" description="Anaerobic nitrite reductase GLB1">
    <location>
        <begin position="1"/>
        <end position="165"/>
    </location>
</feature>
<feature type="domain" description="Globin" evidence="5">
    <location>
        <begin position="12"/>
        <end position="162"/>
    </location>
</feature>
<feature type="short sequence motif" description="Homodimerization" evidence="6 8">
    <location>
        <begin position="45"/>
        <end position="49"/>
    </location>
</feature>
<feature type="short sequence motif" description="Homodimerization" evidence="6 8">
    <location>
        <begin position="115"/>
        <end position="127"/>
    </location>
</feature>
<feature type="binding site" evidence="3">
    <location>
        <position position="55"/>
    </location>
    <ligand>
        <name>heme b</name>
        <dbReference type="ChEBI" id="CHEBI:60344"/>
    </ligand>
</feature>
<feature type="binding site" evidence="2">
    <location>
        <position position="69"/>
    </location>
    <ligand>
        <name>heme b</name>
        <dbReference type="ChEBI" id="CHEBI:60344"/>
    </ligand>
</feature>
<feature type="binding site" description="distal binding residue" evidence="5 6 8">
    <location>
        <position position="73"/>
    </location>
    <ligand>
        <name>heme b</name>
        <dbReference type="ChEBI" id="CHEBI:60344"/>
    </ligand>
    <ligandPart>
        <name>Fe</name>
        <dbReference type="ChEBI" id="CHEBI:18248"/>
    </ligandPart>
</feature>
<feature type="binding site" evidence="6 8">
    <location>
        <position position="103"/>
    </location>
    <ligand>
        <name>heme b</name>
        <dbReference type="ChEBI" id="CHEBI:60344"/>
    </ligand>
</feature>
<feature type="binding site" evidence="6 8">
    <location>
        <position position="107"/>
    </location>
    <ligand>
        <name>heme b</name>
        <dbReference type="ChEBI" id="CHEBI:60344"/>
    </ligand>
</feature>
<feature type="binding site" description="proximal binding residue" evidence="5 6 8">
    <location>
        <position position="108"/>
    </location>
    <ligand>
        <name>heme b</name>
        <dbReference type="ChEBI" id="CHEBI:60344"/>
    </ligand>
    <ligandPart>
        <name>Fe</name>
        <dbReference type="ChEBI" id="CHEBI:18248"/>
    </ligandPart>
</feature>
<feature type="site" description="Homodimerization" evidence="6 8">
    <location>
        <position position="143"/>
    </location>
</feature>
<feature type="helix" evidence="9">
    <location>
        <begin position="15"/>
        <end position="29"/>
    </location>
</feature>
<feature type="helix" evidence="9">
    <location>
        <begin position="32"/>
        <end position="46"/>
    </location>
</feature>
<feature type="helix" evidence="9">
    <location>
        <begin position="48"/>
        <end position="53"/>
    </location>
</feature>
<feature type="helix" evidence="9">
    <location>
        <begin position="68"/>
        <end position="91"/>
    </location>
</feature>
<feature type="helix" evidence="9">
    <location>
        <begin position="101"/>
        <end position="110"/>
    </location>
</feature>
<feature type="helix" evidence="9">
    <location>
        <begin position="115"/>
        <end position="132"/>
    </location>
</feature>
<feature type="turn" evidence="9">
    <location>
        <begin position="135"/>
        <end position="137"/>
    </location>
</feature>
<feature type="helix" evidence="9">
    <location>
        <begin position="140"/>
        <end position="159"/>
    </location>
</feature>
<gene>
    <name type="primary">HB</name>
    <name type="synonym">GLB1</name>
</gene>
<keyword id="KW-0002">3D-structure</keyword>
<keyword id="KW-0963">Cytoplasm</keyword>
<keyword id="KW-0349">Heme</keyword>
<keyword id="KW-0408">Iron</keyword>
<keyword id="KW-0479">Metal-binding</keyword>
<keyword id="KW-0539">Nucleus</keyword>
<keyword id="KW-0560">Oxidoreductase</keyword>
<sequence length="165" mass="18278">MALAEADDGAVVFGEEQEALVLKSWAVMKKDAANLGLRFFLKVFEIAPSAKQMFSFLRDSDVPLEKNPKLKTHAMSVFVMTCEAAAQLRKAGKVTVRETTLKRLGATHLRYGVADGHFEVTGFALLETIKEALPADMWSLEMKKAWAEAYSQLVAAIKREMKPDA</sequence>
<organism>
    <name type="scientific">Zea mays subsp. parviglumis</name>
    <name type="common">Balsas teosinte</name>
    <dbReference type="NCBI Taxonomy" id="76912"/>
    <lineage>
        <taxon>Eukaryota</taxon>
        <taxon>Viridiplantae</taxon>
        <taxon>Streptophyta</taxon>
        <taxon>Embryophyta</taxon>
        <taxon>Tracheophyta</taxon>
        <taxon>Spermatophyta</taxon>
        <taxon>Magnoliopsida</taxon>
        <taxon>Liliopsida</taxon>
        <taxon>Poales</taxon>
        <taxon>Poaceae</taxon>
        <taxon>PACMAD clade</taxon>
        <taxon>Panicoideae</taxon>
        <taxon>Andropogonodae</taxon>
        <taxon>Andropogoneae</taxon>
        <taxon>Tripsacinae</taxon>
        <taxon>Zea</taxon>
    </lineage>
</organism>
<protein>
    <recommendedName>
        <fullName evidence="2">Anaerobic nitrite reductase GLB1</fullName>
        <ecNumber evidence="2">1.7.2.-</ecNumber>
    </recommendedName>
    <alternativeName>
        <fullName>Hbt</fullName>
    </alternativeName>
    <alternativeName>
        <fullName>Non-symbiotic hemoglobin</fullName>
    </alternativeName>
    <alternativeName>
        <fullName>ZEAmp GLB1</fullName>
    </alternativeName>
</protein>
<evidence type="ECO:0000250" key="1">
    <source>
        <dbReference type="UniProtKB" id="A2XE98"/>
    </source>
</evidence>
<evidence type="ECO:0000250" key="2">
    <source>
        <dbReference type="UniProtKB" id="O04986"/>
    </source>
</evidence>
<evidence type="ECO:0000250" key="3">
    <source>
        <dbReference type="UniProtKB" id="P68168"/>
    </source>
</evidence>
<evidence type="ECO:0000250" key="4">
    <source>
        <dbReference type="UniProtKB" id="Q42831"/>
    </source>
</evidence>
<evidence type="ECO:0000255" key="5">
    <source>
        <dbReference type="PROSITE-ProRule" id="PRU00238"/>
    </source>
</evidence>
<evidence type="ECO:0000269" key="6">
    <source ref="2"/>
</evidence>
<evidence type="ECO:0000305" key="7"/>
<evidence type="ECO:0007744" key="8">
    <source>
        <dbReference type="PDB" id="2R50"/>
    </source>
</evidence>
<evidence type="ECO:0007829" key="9">
    <source>
        <dbReference type="PDB" id="2R50"/>
    </source>
</evidence>
<comment type="function">
    <text evidence="2 4">Phytoglobin that reduces nitrite to nitric oxide (NO) under anoxic conditions (e.g. during flooding or in waterlogged soil) (By similarity). May not function as an oxygen storage or transport protein (By similarity). Has an unusually high affinity for O(2) through an hexacoordinate heme iron because of a very low dissociation constant (By similarity).</text>
</comment>
<comment type="catalytic activity">
    <reaction evidence="2">
        <text>Fe(III)-heme b-[protein] + nitric oxide + H2O = Fe(II)-heme b-[protein] + nitrite + 2 H(+)</text>
        <dbReference type="Rhea" id="RHEA:77711"/>
        <dbReference type="Rhea" id="RHEA-COMP:18975"/>
        <dbReference type="Rhea" id="RHEA-COMP:18976"/>
        <dbReference type="ChEBI" id="CHEBI:15377"/>
        <dbReference type="ChEBI" id="CHEBI:15378"/>
        <dbReference type="ChEBI" id="CHEBI:16301"/>
        <dbReference type="ChEBI" id="CHEBI:16480"/>
        <dbReference type="ChEBI" id="CHEBI:55376"/>
        <dbReference type="ChEBI" id="CHEBI:60344"/>
    </reaction>
    <physiologicalReaction direction="right-to-left" evidence="2">
        <dbReference type="Rhea" id="RHEA:77713"/>
    </physiologicalReaction>
</comment>
<comment type="cofactor">
    <cofactor evidence="6">
        <name>heme b</name>
        <dbReference type="ChEBI" id="CHEBI:60344"/>
    </cofactor>
    <text evidence="6">Binds 1 heme group per subunit.</text>
</comment>
<comment type="subunit">
    <text evidence="6">Homodimer.</text>
</comment>
<comment type="subcellular location">
    <subcellularLocation>
        <location evidence="1">Cytoplasm</location>
    </subcellularLocation>
    <subcellularLocation>
        <location evidence="1">Nucleus</location>
    </subcellularLocation>
</comment>
<comment type="tissue specificity">
    <text>In vegetative but not in embryonic organs.</text>
</comment>
<comment type="similarity">
    <text evidence="7">Belongs to the plant globin family.</text>
</comment>
<proteinExistence type="evidence at protein level"/>
<reference key="1">
    <citation type="journal article" date="2001" name="Biochim. Biophys. Acta">
        <title>Cloning and expression analysis of hemoglobin genes from maize (Zea mays ssp. mays) and teosinte (Zea mays ssp. parviglumis).</title>
        <authorList>
            <person name="Arechaga-Ocampo E."/>
            <person name="Saenz-Rivera J."/>
            <person name="Sarath G."/>
            <person name="Klucas R.V."/>
            <person name="Arredondo-Peter R."/>
        </authorList>
    </citation>
    <scope>NUCLEOTIDE SEQUENCE [GENOMIC DNA]</scope>
</reference>
<reference key="2">
    <citation type="submission" date="2007-09" db="PDB data bank">
        <title>The crystal structure of nonsymbiotic corn hemoglobin 1.</title>
        <authorList>
            <person name="Smagghe B.J."/>
            <person name="Hoy J.A."/>
            <person name="Hargrove M.S."/>
        </authorList>
    </citation>
    <scope>X-RAY CRYSTALLOGRAPHY (2.20 ANGSTROMS) IN COMPLEX WITH HEME B</scope>
    <scope>HOMODIMER</scope>
    <scope>COFACTOR</scope>
</reference>
<accession>Q9M593</accession>
<dbReference type="EC" id="1.7.2.-" evidence="2"/>
<dbReference type="EMBL" id="AF291052">
    <property type="protein sequence ID" value="AAG01183.1"/>
    <property type="molecule type" value="Genomic_DNA"/>
</dbReference>
<dbReference type="PDB" id="2R50">
    <property type="method" value="X-ray"/>
    <property type="resolution" value="2.20 A"/>
    <property type="chains" value="A/B/C/D=1-165"/>
</dbReference>
<dbReference type="PDBsum" id="2R50"/>
<dbReference type="SMR" id="Q9M593"/>
<dbReference type="EvolutionaryTrace" id="Q9M593"/>
<dbReference type="GO" id="GO:0005737">
    <property type="term" value="C:cytoplasm"/>
    <property type="evidence" value="ECO:0007669"/>
    <property type="project" value="UniProtKB-SubCell"/>
</dbReference>
<dbReference type="GO" id="GO:0005634">
    <property type="term" value="C:nucleus"/>
    <property type="evidence" value="ECO:0007669"/>
    <property type="project" value="UniProtKB-SubCell"/>
</dbReference>
<dbReference type="GO" id="GO:0020037">
    <property type="term" value="F:heme binding"/>
    <property type="evidence" value="ECO:0007669"/>
    <property type="project" value="InterPro"/>
</dbReference>
<dbReference type="GO" id="GO:0046872">
    <property type="term" value="F:metal ion binding"/>
    <property type="evidence" value="ECO:0007669"/>
    <property type="project" value="UniProtKB-KW"/>
</dbReference>
<dbReference type="GO" id="GO:0016491">
    <property type="term" value="F:oxidoreductase activity"/>
    <property type="evidence" value="ECO:0007669"/>
    <property type="project" value="UniProtKB-KW"/>
</dbReference>
<dbReference type="GO" id="GO:0019825">
    <property type="term" value="F:oxygen binding"/>
    <property type="evidence" value="ECO:0007669"/>
    <property type="project" value="InterPro"/>
</dbReference>
<dbReference type="CDD" id="cd14784">
    <property type="entry name" value="class1_nsHb-like"/>
    <property type="match status" value="1"/>
</dbReference>
<dbReference type="Gene3D" id="1.10.490.10">
    <property type="entry name" value="Globins"/>
    <property type="match status" value="1"/>
</dbReference>
<dbReference type="InterPro" id="IPR000971">
    <property type="entry name" value="Globin"/>
</dbReference>
<dbReference type="InterPro" id="IPR009050">
    <property type="entry name" value="Globin-like_sf"/>
</dbReference>
<dbReference type="InterPro" id="IPR012292">
    <property type="entry name" value="Globin/Proto"/>
</dbReference>
<dbReference type="InterPro" id="IPR001032">
    <property type="entry name" value="Leghaemoglobin-like"/>
</dbReference>
<dbReference type="InterPro" id="IPR019824">
    <property type="entry name" value="Leghaemoglobin_Fe_BS"/>
</dbReference>
<dbReference type="PANTHER" id="PTHR22924">
    <property type="entry name" value="LEGHEMOGLOBIN-RELATED"/>
    <property type="match status" value="1"/>
</dbReference>
<dbReference type="PANTHER" id="PTHR22924:SF98">
    <property type="entry name" value="NON-SYMBIOTIC HEMOGLOBIN 3"/>
    <property type="match status" value="1"/>
</dbReference>
<dbReference type="Pfam" id="PF00042">
    <property type="entry name" value="Globin"/>
    <property type="match status" value="1"/>
</dbReference>
<dbReference type="PRINTS" id="PR00188">
    <property type="entry name" value="PLANTGLOBIN"/>
</dbReference>
<dbReference type="SUPFAM" id="SSF46458">
    <property type="entry name" value="Globin-like"/>
    <property type="match status" value="1"/>
</dbReference>
<dbReference type="PROSITE" id="PS01033">
    <property type="entry name" value="GLOBIN"/>
    <property type="match status" value="1"/>
</dbReference>
<dbReference type="PROSITE" id="PS00208">
    <property type="entry name" value="PLANT_GLOBIN"/>
    <property type="match status" value="1"/>
</dbReference>